<organism>
    <name type="scientific">Methanocaldococcus jannaschii (strain ATCC 43067 / DSM 2661 / JAL-1 / JCM 10045 / NBRC 100440)</name>
    <name type="common">Methanococcus jannaschii</name>
    <dbReference type="NCBI Taxonomy" id="243232"/>
    <lineage>
        <taxon>Archaea</taxon>
        <taxon>Methanobacteriati</taxon>
        <taxon>Methanobacteriota</taxon>
        <taxon>Methanomada group</taxon>
        <taxon>Methanococci</taxon>
        <taxon>Methanococcales</taxon>
        <taxon>Methanocaldococcaceae</taxon>
        <taxon>Methanocaldococcus</taxon>
    </lineage>
</organism>
<keyword id="KW-1185">Reference proteome</keyword>
<feature type="chain" id="PRO_0000107066" description="Uncharacterized protein MJ0830">
    <location>
        <begin position="1"/>
        <end position="252"/>
    </location>
</feature>
<protein>
    <recommendedName>
        <fullName>Uncharacterized protein MJ0830</fullName>
    </recommendedName>
</protein>
<name>Y830_METJA</name>
<gene>
    <name type="ordered locus">MJ0830</name>
</gene>
<accession>Q58240</accession>
<sequence>MVFLKKLIKLKNNLKEKFKNKKIIIAYSGGIDSLLLSILLSEITETLCIFIKTPYISEWSLNNAIINAKKYNLNLKVIKIDKIIKNVPERCYLCKKMFFEILTKEKEKYNYDVVVDGTNYDDLFEDRPGLRAKEEFNIGSPFADFKIGKKDILEIAKELNINIPPKETCLLTRFEFNREISIEDLKKIEELEEFLRNYVKGAIRVRDYKNLAVIEIEDDLSKIINEKEEIIKKFKDYGFKKVCINLEIYRSY</sequence>
<evidence type="ECO:0000305" key="1"/>
<proteinExistence type="inferred from homology"/>
<comment type="similarity">
    <text evidence="1">Belongs to the LarE family.</text>
</comment>
<reference key="1">
    <citation type="journal article" date="1996" name="Science">
        <title>Complete genome sequence of the methanogenic archaeon, Methanococcus jannaschii.</title>
        <authorList>
            <person name="Bult C.J."/>
            <person name="White O."/>
            <person name="Olsen G.J."/>
            <person name="Zhou L."/>
            <person name="Fleischmann R.D."/>
            <person name="Sutton G.G."/>
            <person name="Blake J.A."/>
            <person name="FitzGerald L.M."/>
            <person name="Clayton R.A."/>
            <person name="Gocayne J.D."/>
            <person name="Kerlavage A.R."/>
            <person name="Dougherty B.A."/>
            <person name="Tomb J.-F."/>
            <person name="Adams M.D."/>
            <person name="Reich C.I."/>
            <person name="Overbeek R."/>
            <person name="Kirkness E.F."/>
            <person name="Weinstock K.G."/>
            <person name="Merrick J.M."/>
            <person name="Glodek A."/>
            <person name="Scott J.L."/>
            <person name="Geoghagen N.S.M."/>
            <person name="Weidman J.F."/>
            <person name="Fuhrmann J.L."/>
            <person name="Nguyen D."/>
            <person name="Utterback T.R."/>
            <person name="Kelley J.M."/>
            <person name="Peterson J.D."/>
            <person name="Sadow P.W."/>
            <person name="Hanna M.C."/>
            <person name="Cotton M.D."/>
            <person name="Roberts K.M."/>
            <person name="Hurst M.A."/>
            <person name="Kaine B.P."/>
            <person name="Borodovsky M."/>
            <person name="Klenk H.-P."/>
            <person name="Fraser C.M."/>
            <person name="Smith H.O."/>
            <person name="Woese C.R."/>
            <person name="Venter J.C."/>
        </authorList>
    </citation>
    <scope>NUCLEOTIDE SEQUENCE [LARGE SCALE GENOMIC DNA]</scope>
    <source>
        <strain>ATCC 43067 / DSM 2661 / JAL-1 / JCM 10045 / NBRC 100440</strain>
    </source>
</reference>
<dbReference type="EMBL" id="L77117">
    <property type="protein sequence ID" value="AAB98829.1"/>
    <property type="molecule type" value="Genomic_DNA"/>
</dbReference>
<dbReference type="PIR" id="F64403">
    <property type="entry name" value="F64403"/>
</dbReference>
<dbReference type="RefSeq" id="WP_010870341.1">
    <property type="nucleotide sequence ID" value="NC_000909.1"/>
</dbReference>
<dbReference type="SMR" id="Q58240"/>
<dbReference type="STRING" id="243232.MJ_0830"/>
<dbReference type="PaxDb" id="243232-MJ_0830"/>
<dbReference type="DNASU" id="1451713"/>
<dbReference type="EnsemblBacteria" id="AAB98829">
    <property type="protein sequence ID" value="AAB98829"/>
    <property type="gene ID" value="MJ_0830"/>
</dbReference>
<dbReference type="GeneID" id="1451713"/>
<dbReference type="KEGG" id="mja:MJ_0830"/>
<dbReference type="eggNOG" id="arCOG00043">
    <property type="taxonomic scope" value="Archaea"/>
</dbReference>
<dbReference type="HOGENOM" id="CLU_061181_0_0_2"/>
<dbReference type="InParanoid" id="Q58240"/>
<dbReference type="OrthoDB" id="61764at2157"/>
<dbReference type="PhylomeDB" id="Q58240"/>
<dbReference type="Proteomes" id="UP000000805">
    <property type="component" value="Chromosome"/>
</dbReference>
<dbReference type="GO" id="GO:0016783">
    <property type="term" value="F:sulfurtransferase activity"/>
    <property type="evidence" value="ECO:0007669"/>
    <property type="project" value="InterPro"/>
</dbReference>
<dbReference type="CDD" id="cd01990">
    <property type="entry name" value="LarE-like"/>
    <property type="match status" value="1"/>
</dbReference>
<dbReference type="Gene3D" id="3.40.50.620">
    <property type="entry name" value="HUPs"/>
    <property type="match status" value="1"/>
</dbReference>
<dbReference type="InterPro" id="IPR005232">
    <property type="entry name" value="LarE"/>
</dbReference>
<dbReference type="InterPro" id="IPR052188">
    <property type="entry name" value="Ni-pincer_cofactor_biosynth"/>
</dbReference>
<dbReference type="InterPro" id="IPR014729">
    <property type="entry name" value="Rossmann-like_a/b/a_fold"/>
</dbReference>
<dbReference type="NCBIfam" id="TIGR00268">
    <property type="entry name" value="ATP-dependent sacrificial sulfur transferase LarE"/>
    <property type="match status" value="1"/>
</dbReference>
<dbReference type="PANTHER" id="PTHR43169">
    <property type="entry name" value="EXSB FAMILY PROTEIN"/>
    <property type="match status" value="1"/>
</dbReference>
<dbReference type="PANTHER" id="PTHR43169:SF2">
    <property type="entry name" value="NAD_GMP SYNTHASE DOMAIN-CONTAINING PROTEIN"/>
    <property type="match status" value="1"/>
</dbReference>
<dbReference type="PIRSF" id="PIRSF006661">
    <property type="entry name" value="PP-lp_UCP006661"/>
    <property type="match status" value="1"/>
</dbReference>
<dbReference type="SUPFAM" id="SSF52402">
    <property type="entry name" value="Adenine nucleotide alpha hydrolases-like"/>
    <property type="match status" value="1"/>
</dbReference>